<organism>
    <name type="scientific">Mycolicibacterium vanbaalenii (strain DSM 7251 / JCM 13017 / BCRC 16820 / KCTC 9966 / NRRL B-24157 / PYR-1)</name>
    <name type="common">Mycobacterium vanbaalenii</name>
    <dbReference type="NCBI Taxonomy" id="350058"/>
    <lineage>
        <taxon>Bacteria</taxon>
        <taxon>Bacillati</taxon>
        <taxon>Actinomycetota</taxon>
        <taxon>Actinomycetes</taxon>
        <taxon>Mycobacteriales</taxon>
        <taxon>Mycobacteriaceae</taxon>
        <taxon>Mycolicibacterium</taxon>
    </lineage>
</organism>
<proteinExistence type="inferred from homology"/>
<feature type="chain" id="PRO_0000308430" description="Response regulator MprA">
    <location>
        <begin position="1"/>
        <end position="231"/>
    </location>
</feature>
<feature type="domain" description="Response regulatory" evidence="2">
    <location>
        <begin position="4"/>
        <end position="118"/>
    </location>
</feature>
<feature type="DNA-binding region" description="OmpR/PhoB-type" evidence="3">
    <location>
        <begin position="130"/>
        <end position="228"/>
    </location>
</feature>
<feature type="modified residue" description="4-aspartylphosphate" evidence="2">
    <location>
        <position position="48"/>
    </location>
</feature>
<name>MPRA_MYCVP</name>
<accession>A1TEL7</accession>
<evidence type="ECO:0000250" key="1"/>
<evidence type="ECO:0000255" key="2">
    <source>
        <dbReference type="PROSITE-ProRule" id="PRU00169"/>
    </source>
</evidence>
<evidence type="ECO:0000255" key="3">
    <source>
        <dbReference type="PROSITE-ProRule" id="PRU01091"/>
    </source>
</evidence>
<evidence type="ECO:0000305" key="4"/>
<gene>
    <name type="primary">mprA</name>
    <name type="ordered locus">Mvan_4844</name>
</gene>
<sequence length="231" mass="25767">MPVRILVVDDDRAVRESLRRSLSFNGYSVELAQDGREALDLIASDRPDAVVLDVMMPRLDGLEVCRQLRSTGDDLPILVLTARDSVSERVAGLDAGADDYLPKPFALEELLARMRALLRRTTPDDGAGESAAMTFSDLSLDPVTREVTRGDRPISLTRTEFSLLEMLIANPRRVLTRSRILEEVWGFDFPTSGNALEVYVGYLRRKTEAEGEPRLIHTVRGVGYVLRETPP</sequence>
<comment type="function">
    <text evidence="1">Member of the two-component regulatory system MprB/MprA which contributes to maintaining a balance among several systems involved in stress resistance and is required for establishment and maintenance of persistent infection in the host. Functions as a transcriptional regulator that recognizes a 19-bp nucleotide motif comprizing two loosely conserved 8-bp direct DNA-binding motif repeats separated by a 3-bp spacer region (By similarity).</text>
</comment>
<comment type="subcellular location">
    <subcellularLocation>
        <location evidence="4">Cytoplasm</location>
    </subcellularLocation>
</comment>
<comment type="PTM">
    <text evidence="1">Phosphorylated and dephosphorylated by MprB.</text>
</comment>
<protein>
    <recommendedName>
        <fullName>Response regulator MprA</fullName>
    </recommendedName>
    <alternativeName>
        <fullName>Mycobacterial persistence regulator A</fullName>
    </alternativeName>
</protein>
<reference key="1">
    <citation type="submission" date="2006-12" db="EMBL/GenBank/DDBJ databases">
        <title>Complete sequence of Mycobacterium vanbaalenii PYR-1.</title>
        <authorList>
            <consortium name="US DOE Joint Genome Institute"/>
            <person name="Copeland A."/>
            <person name="Lucas S."/>
            <person name="Lapidus A."/>
            <person name="Barry K."/>
            <person name="Detter J.C."/>
            <person name="Glavina del Rio T."/>
            <person name="Hammon N."/>
            <person name="Israni S."/>
            <person name="Dalin E."/>
            <person name="Tice H."/>
            <person name="Pitluck S."/>
            <person name="Singan V."/>
            <person name="Schmutz J."/>
            <person name="Larimer F."/>
            <person name="Land M."/>
            <person name="Hauser L."/>
            <person name="Kyrpides N."/>
            <person name="Anderson I.J."/>
            <person name="Miller C."/>
            <person name="Richardson P."/>
        </authorList>
    </citation>
    <scope>NUCLEOTIDE SEQUENCE [LARGE SCALE GENOMIC DNA]</scope>
    <source>
        <strain>DSM 7251 / JCM 13017 / BCRC 16820 / KCTC 9966 / NRRL B-24157 / PYR-1</strain>
    </source>
</reference>
<dbReference type="EMBL" id="CP000511">
    <property type="protein sequence ID" value="ABM15617.1"/>
    <property type="molecule type" value="Genomic_DNA"/>
</dbReference>
<dbReference type="SMR" id="A1TEL7"/>
<dbReference type="STRING" id="350058.Mvan_4844"/>
<dbReference type="KEGG" id="mva:Mvan_4844"/>
<dbReference type="eggNOG" id="COG0745">
    <property type="taxonomic scope" value="Bacteria"/>
</dbReference>
<dbReference type="HOGENOM" id="CLU_000445_30_1_11"/>
<dbReference type="Proteomes" id="UP000009159">
    <property type="component" value="Chromosome"/>
</dbReference>
<dbReference type="GO" id="GO:0005829">
    <property type="term" value="C:cytosol"/>
    <property type="evidence" value="ECO:0007669"/>
    <property type="project" value="TreeGrafter"/>
</dbReference>
<dbReference type="GO" id="GO:0032993">
    <property type="term" value="C:protein-DNA complex"/>
    <property type="evidence" value="ECO:0007669"/>
    <property type="project" value="TreeGrafter"/>
</dbReference>
<dbReference type="GO" id="GO:0000156">
    <property type="term" value="F:phosphorelay response regulator activity"/>
    <property type="evidence" value="ECO:0007669"/>
    <property type="project" value="TreeGrafter"/>
</dbReference>
<dbReference type="GO" id="GO:0000976">
    <property type="term" value="F:transcription cis-regulatory region binding"/>
    <property type="evidence" value="ECO:0007669"/>
    <property type="project" value="TreeGrafter"/>
</dbReference>
<dbReference type="GO" id="GO:0006355">
    <property type="term" value="P:regulation of DNA-templated transcription"/>
    <property type="evidence" value="ECO:0007669"/>
    <property type="project" value="InterPro"/>
</dbReference>
<dbReference type="CDD" id="cd17627">
    <property type="entry name" value="REC_OmpR_PrrA-like"/>
    <property type="match status" value="1"/>
</dbReference>
<dbReference type="CDD" id="cd00383">
    <property type="entry name" value="trans_reg_C"/>
    <property type="match status" value="1"/>
</dbReference>
<dbReference type="FunFam" id="3.40.50.2300:FF:000001">
    <property type="entry name" value="DNA-binding response regulator PhoB"/>
    <property type="match status" value="1"/>
</dbReference>
<dbReference type="FunFam" id="1.10.10.10:FF:000005">
    <property type="entry name" value="Two-component system response regulator"/>
    <property type="match status" value="1"/>
</dbReference>
<dbReference type="Gene3D" id="3.40.50.2300">
    <property type="match status" value="1"/>
</dbReference>
<dbReference type="Gene3D" id="6.10.250.690">
    <property type="match status" value="1"/>
</dbReference>
<dbReference type="Gene3D" id="1.10.10.10">
    <property type="entry name" value="Winged helix-like DNA-binding domain superfamily/Winged helix DNA-binding domain"/>
    <property type="match status" value="1"/>
</dbReference>
<dbReference type="InterPro" id="IPR011006">
    <property type="entry name" value="CheY-like_superfamily"/>
</dbReference>
<dbReference type="InterPro" id="IPR001867">
    <property type="entry name" value="OmpR/PhoB-type_DNA-bd"/>
</dbReference>
<dbReference type="InterPro" id="IPR001789">
    <property type="entry name" value="Sig_transdc_resp-reg_receiver"/>
</dbReference>
<dbReference type="InterPro" id="IPR039420">
    <property type="entry name" value="WalR-like"/>
</dbReference>
<dbReference type="InterPro" id="IPR036388">
    <property type="entry name" value="WH-like_DNA-bd_sf"/>
</dbReference>
<dbReference type="PANTHER" id="PTHR48111">
    <property type="entry name" value="REGULATOR OF RPOS"/>
    <property type="match status" value="1"/>
</dbReference>
<dbReference type="PANTHER" id="PTHR48111:SF22">
    <property type="entry name" value="REGULATOR OF RPOS"/>
    <property type="match status" value="1"/>
</dbReference>
<dbReference type="Pfam" id="PF00072">
    <property type="entry name" value="Response_reg"/>
    <property type="match status" value="1"/>
</dbReference>
<dbReference type="Pfam" id="PF00486">
    <property type="entry name" value="Trans_reg_C"/>
    <property type="match status" value="1"/>
</dbReference>
<dbReference type="SMART" id="SM00448">
    <property type="entry name" value="REC"/>
    <property type="match status" value="1"/>
</dbReference>
<dbReference type="SMART" id="SM00862">
    <property type="entry name" value="Trans_reg_C"/>
    <property type="match status" value="1"/>
</dbReference>
<dbReference type="SUPFAM" id="SSF52172">
    <property type="entry name" value="CheY-like"/>
    <property type="match status" value="1"/>
</dbReference>
<dbReference type="PROSITE" id="PS51755">
    <property type="entry name" value="OMPR_PHOB"/>
    <property type="match status" value="1"/>
</dbReference>
<dbReference type="PROSITE" id="PS50110">
    <property type="entry name" value="RESPONSE_REGULATORY"/>
    <property type="match status" value="1"/>
</dbReference>
<keyword id="KW-0963">Cytoplasm</keyword>
<keyword id="KW-0238">DNA-binding</keyword>
<keyword id="KW-0597">Phosphoprotein</keyword>
<keyword id="KW-0346">Stress response</keyword>
<keyword id="KW-0804">Transcription</keyword>
<keyword id="KW-0805">Transcription regulation</keyword>
<keyword id="KW-0902">Two-component regulatory system</keyword>
<keyword id="KW-0843">Virulence</keyword>